<accession>P09633</accession>
<feature type="chain" id="PRO_0000200185" description="Homeobox protein Hox-C9">
    <location>
        <begin position="1"/>
        <end position="260"/>
    </location>
</feature>
<feature type="DNA-binding region" description="Homeobox" evidence="3">
    <location>
        <begin position="192"/>
        <end position="251"/>
    </location>
</feature>
<feature type="region of interest" description="Disordered" evidence="4">
    <location>
        <begin position="120"/>
        <end position="182"/>
    </location>
</feature>
<feature type="modified residue" description="Phosphoserine" evidence="2">
    <location>
        <position position="159"/>
    </location>
</feature>
<sequence>MSATGPISNYYVDSLISHDNEDLLASRFPATGAHPAAARPSGLVPDCSDFPSCSFAPKPAVFSTSWAPVPSQSSVVYHPYGPQPHLGADTRYMRTWLEPLSGAVSFPSFPAGGRHYALKPDAYPGRRADCGPGDGRSYPDYMYGSPGELRDRAPQTLPSPEADALAGSKHKEEKADLDPSNPVANWIHARSTRKKRCPYTKYQTLELEKEFLFNMYLTRDRRYEVARVLNLTERQVKIWFQNRRMKMKKMNKEKTDKEQS</sequence>
<protein>
    <recommendedName>
        <fullName>Homeobox protein Hox-C9</fullName>
    </recommendedName>
    <alternativeName>
        <fullName>Homeobox protein Hox-3.2</fullName>
    </alternativeName>
</protein>
<evidence type="ECO:0000250" key="1"/>
<evidence type="ECO:0000250" key="2">
    <source>
        <dbReference type="UniProtKB" id="P31274"/>
    </source>
</evidence>
<evidence type="ECO:0000255" key="3">
    <source>
        <dbReference type="PROSITE-ProRule" id="PRU00108"/>
    </source>
</evidence>
<evidence type="ECO:0000256" key="4">
    <source>
        <dbReference type="SAM" id="MobiDB-lite"/>
    </source>
</evidence>
<evidence type="ECO:0000305" key="5"/>
<keyword id="KW-0217">Developmental protein</keyword>
<keyword id="KW-0238">DNA-binding</keyword>
<keyword id="KW-0371">Homeobox</keyword>
<keyword id="KW-0539">Nucleus</keyword>
<keyword id="KW-0597">Phosphoprotein</keyword>
<keyword id="KW-1185">Reference proteome</keyword>
<keyword id="KW-0804">Transcription</keyword>
<keyword id="KW-0805">Transcription regulation</keyword>
<reference key="1">
    <citation type="journal article" date="1990" name="Development">
        <title>Structure and expression pattern of the murine Hox-3.2 gene.</title>
        <authorList>
            <person name="Erselius J.R."/>
            <person name="Goulding M.D."/>
            <person name="Gruss P."/>
        </authorList>
    </citation>
    <scope>NUCLEOTIDE SEQUENCE</scope>
</reference>
<reference key="2">
    <citation type="journal article" date="2005" name="Science">
        <title>The transcriptional landscape of the mammalian genome.</title>
        <authorList>
            <person name="Carninci P."/>
            <person name="Kasukawa T."/>
            <person name="Katayama S."/>
            <person name="Gough J."/>
            <person name="Frith M.C."/>
            <person name="Maeda N."/>
            <person name="Oyama R."/>
            <person name="Ravasi T."/>
            <person name="Lenhard B."/>
            <person name="Wells C."/>
            <person name="Kodzius R."/>
            <person name="Shimokawa K."/>
            <person name="Bajic V.B."/>
            <person name="Brenner S.E."/>
            <person name="Batalov S."/>
            <person name="Forrest A.R."/>
            <person name="Zavolan M."/>
            <person name="Davis M.J."/>
            <person name="Wilming L.G."/>
            <person name="Aidinis V."/>
            <person name="Allen J.E."/>
            <person name="Ambesi-Impiombato A."/>
            <person name="Apweiler R."/>
            <person name="Aturaliya R.N."/>
            <person name="Bailey T.L."/>
            <person name="Bansal M."/>
            <person name="Baxter L."/>
            <person name="Beisel K.W."/>
            <person name="Bersano T."/>
            <person name="Bono H."/>
            <person name="Chalk A.M."/>
            <person name="Chiu K.P."/>
            <person name="Choudhary V."/>
            <person name="Christoffels A."/>
            <person name="Clutterbuck D.R."/>
            <person name="Crowe M.L."/>
            <person name="Dalla E."/>
            <person name="Dalrymple B.P."/>
            <person name="de Bono B."/>
            <person name="Della Gatta G."/>
            <person name="di Bernardo D."/>
            <person name="Down T."/>
            <person name="Engstrom P."/>
            <person name="Fagiolini M."/>
            <person name="Faulkner G."/>
            <person name="Fletcher C.F."/>
            <person name="Fukushima T."/>
            <person name="Furuno M."/>
            <person name="Futaki S."/>
            <person name="Gariboldi M."/>
            <person name="Georgii-Hemming P."/>
            <person name="Gingeras T.R."/>
            <person name="Gojobori T."/>
            <person name="Green R.E."/>
            <person name="Gustincich S."/>
            <person name="Harbers M."/>
            <person name="Hayashi Y."/>
            <person name="Hensch T.K."/>
            <person name="Hirokawa N."/>
            <person name="Hill D."/>
            <person name="Huminiecki L."/>
            <person name="Iacono M."/>
            <person name="Ikeo K."/>
            <person name="Iwama A."/>
            <person name="Ishikawa T."/>
            <person name="Jakt M."/>
            <person name="Kanapin A."/>
            <person name="Katoh M."/>
            <person name="Kawasawa Y."/>
            <person name="Kelso J."/>
            <person name="Kitamura H."/>
            <person name="Kitano H."/>
            <person name="Kollias G."/>
            <person name="Krishnan S.P."/>
            <person name="Kruger A."/>
            <person name="Kummerfeld S.K."/>
            <person name="Kurochkin I.V."/>
            <person name="Lareau L.F."/>
            <person name="Lazarevic D."/>
            <person name="Lipovich L."/>
            <person name="Liu J."/>
            <person name="Liuni S."/>
            <person name="McWilliam S."/>
            <person name="Madan Babu M."/>
            <person name="Madera M."/>
            <person name="Marchionni L."/>
            <person name="Matsuda H."/>
            <person name="Matsuzawa S."/>
            <person name="Miki H."/>
            <person name="Mignone F."/>
            <person name="Miyake S."/>
            <person name="Morris K."/>
            <person name="Mottagui-Tabar S."/>
            <person name="Mulder N."/>
            <person name="Nakano N."/>
            <person name="Nakauchi H."/>
            <person name="Ng P."/>
            <person name="Nilsson R."/>
            <person name="Nishiguchi S."/>
            <person name="Nishikawa S."/>
            <person name="Nori F."/>
            <person name="Ohara O."/>
            <person name="Okazaki Y."/>
            <person name="Orlando V."/>
            <person name="Pang K.C."/>
            <person name="Pavan W.J."/>
            <person name="Pavesi G."/>
            <person name="Pesole G."/>
            <person name="Petrovsky N."/>
            <person name="Piazza S."/>
            <person name="Reed J."/>
            <person name="Reid J.F."/>
            <person name="Ring B.Z."/>
            <person name="Ringwald M."/>
            <person name="Rost B."/>
            <person name="Ruan Y."/>
            <person name="Salzberg S.L."/>
            <person name="Sandelin A."/>
            <person name="Schneider C."/>
            <person name="Schoenbach C."/>
            <person name="Sekiguchi K."/>
            <person name="Semple C.A."/>
            <person name="Seno S."/>
            <person name="Sessa L."/>
            <person name="Sheng Y."/>
            <person name="Shibata Y."/>
            <person name="Shimada H."/>
            <person name="Shimada K."/>
            <person name="Silva D."/>
            <person name="Sinclair B."/>
            <person name="Sperling S."/>
            <person name="Stupka E."/>
            <person name="Sugiura K."/>
            <person name="Sultana R."/>
            <person name="Takenaka Y."/>
            <person name="Taki K."/>
            <person name="Tammoja K."/>
            <person name="Tan S.L."/>
            <person name="Tang S."/>
            <person name="Taylor M.S."/>
            <person name="Tegner J."/>
            <person name="Teichmann S.A."/>
            <person name="Ueda H.R."/>
            <person name="van Nimwegen E."/>
            <person name="Verardo R."/>
            <person name="Wei C.L."/>
            <person name="Yagi K."/>
            <person name="Yamanishi H."/>
            <person name="Zabarovsky E."/>
            <person name="Zhu S."/>
            <person name="Zimmer A."/>
            <person name="Hide W."/>
            <person name="Bult C."/>
            <person name="Grimmond S.M."/>
            <person name="Teasdale R.D."/>
            <person name="Liu E.T."/>
            <person name="Brusic V."/>
            <person name="Quackenbush J."/>
            <person name="Wahlestedt C."/>
            <person name="Mattick J.S."/>
            <person name="Hume D.A."/>
            <person name="Kai C."/>
            <person name="Sasaki D."/>
            <person name="Tomaru Y."/>
            <person name="Fukuda S."/>
            <person name="Kanamori-Katayama M."/>
            <person name="Suzuki M."/>
            <person name="Aoki J."/>
            <person name="Arakawa T."/>
            <person name="Iida J."/>
            <person name="Imamura K."/>
            <person name="Itoh M."/>
            <person name="Kato T."/>
            <person name="Kawaji H."/>
            <person name="Kawagashira N."/>
            <person name="Kawashima T."/>
            <person name="Kojima M."/>
            <person name="Kondo S."/>
            <person name="Konno H."/>
            <person name="Nakano K."/>
            <person name="Ninomiya N."/>
            <person name="Nishio T."/>
            <person name="Okada M."/>
            <person name="Plessy C."/>
            <person name="Shibata K."/>
            <person name="Shiraki T."/>
            <person name="Suzuki S."/>
            <person name="Tagami M."/>
            <person name="Waki K."/>
            <person name="Watahiki A."/>
            <person name="Okamura-Oho Y."/>
            <person name="Suzuki H."/>
            <person name="Kawai J."/>
            <person name="Hayashizaki Y."/>
        </authorList>
    </citation>
    <scope>NUCLEOTIDE SEQUENCE [LARGE SCALE MRNA]</scope>
    <source>
        <strain>C57BL/6J</strain>
    </source>
</reference>
<reference key="3">
    <citation type="journal article" date="2004" name="Genome Res.">
        <title>The status, quality, and expansion of the NIH full-length cDNA project: the Mammalian Gene Collection (MGC).</title>
        <authorList>
            <consortium name="The MGC Project Team"/>
        </authorList>
    </citation>
    <scope>NUCLEOTIDE SEQUENCE [LARGE SCALE MRNA]</scope>
    <source>
        <tissue>Limb</tissue>
    </source>
</reference>
<reference key="4">
    <citation type="journal article" date="1988" name="EMBO J.">
        <title>Primary structure and developmental expression pattern of Hox 3.1, a member of the murine Hox 3 homeobox gene cluster.</title>
        <authorList>
            <person name="Breier G."/>
            <person name="Dressler G.R."/>
            <person name="Gruss P."/>
        </authorList>
    </citation>
    <scope>NUCLEOTIDE SEQUENCE [MRNA] OF 187-260</scope>
</reference>
<reference key="5">
    <citation type="journal article" date="1990" name="Proc. Natl. Acad. Sci. U.S.A.">
        <title>Structural analysis of the Hox-3.1 transcription unit and the Hox-3.2-Hox-3.1 intergenic region.</title>
        <authorList>
            <person name="Awgulewitsch A."/>
            <person name="Bieberich C."/>
            <person name="Bogarad L."/>
            <person name="Shashikant C."/>
            <person name="Ruddle F.H."/>
        </authorList>
    </citation>
    <scope>NUCLEOTIDE SEQUENCE [GENOMIC DNA] OF 187-260</scope>
    <source>
        <strain>CD-1</strain>
    </source>
</reference>
<gene>
    <name type="primary">Hoxc9</name>
    <name type="synonym">Hox-3.2</name>
    <name type="synonym">Hoxc-9</name>
</gene>
<comment type="function">
    <text>Sequence-specific transcription factor which is part of a developmental regulatory system that provides cells with specific positional identities on the anterior-posterior axis.</text>
</comment>
<comment type="subunit">
    <text evidence="1">Interacts with Geminin/GMNN, which inhibits transcriptional activity.</text>
</comment>
<comment type="subcellular location">
    <subcellularLocation>
        <location>Nucleus</location>
    </subcellularLocation>
</comment>
<comment type="similarity">
    <text evidence="5">Belongs to the Abd-B homeobox family.</text>
</comment>
<organism>
    <name type="scientific">Mus musculus</name>
    <name type="common">Mouse</name>
    <dbReference type="NCBI Taxonomy" id="10090"/>
    <lineage>
        <taxon>Eukaryota</taxon>
        <taxon>Metazoa</taxon>
        <taxon>Chordata</taxon>
        <taxon>Craniata</taxon>
        <taxon>Vertebrata</taxon>
        <taxon>Euteleostomi</taxon>
        <taxon>Mammalia</taxon>
        <taxon>Eutheria</taxon>
        <taxon>Euarchontoglires</taxon>
        <taxon>Glires</taxon>
        <taxon>Rodentia</taxon>
        <taxon>Myomorpha</taxon>
        <taxon>Muroidea</taxon>
        <taxon>Muridae</taxon>
        <taxon>Murinae</taxon>
        <taxon>Mus</taxon>
        <taxon>Mus</taxon>
    </lineage>
</organism>
<name>HXC9_MOUSE</name>
<dbReference type="EMBL" id="X55318">
    <property type="protein sequence ID" value="CAA39026.1"/>
    <property type="molecule type" value="mRNA"/>
</dbReference>
<dbReference type="EMBL" id="AK012173">
    <property type="protein sequence ID" value="BAB28077.1"/>
    <property type="molecule type" value="mRNA"/>
</dbReference>
<dbReference type="EMBL" id="AK078758">
    <property type="protein sequence ID" value="BAC37378.1"/>
    <property type="molecule type" value="mRNA"/>
</dbReference>
<dbReference type="EMBL" id="BC050838">
    <property type="protein sequence ID" value="AAH50838.1"/>
    <property type="molecule type" value="mRNA"/>
</dbReference>
<dbReference type="EMBL" id="X07647">
    <property type="protein sequence ID" value="CAA30487.1"/>
    <property type="molecule type" value="mRNA"/>
</dbReference>
<dbReference type="EMBL" id="M35603">
    <property type="protein sequence ID" value="AAA37856.1"/>
    <property type="molecule type" value="Genomic_DNA"/>
</dbReference>
<dbReference type="CCDS" id="CCDS27893.1"/>
<dbReference type="PIR" id="A43821">
    <property type="entry name" value="A43821"/>
</dbReference>
<dbReference type="RefSeq" id="NP_032298.1">
    <property type="nucleotide sequence ID" value="NM_008272.3"/>
</dbReference>
<dbReference type="RefSeq" id="XP_036015057.1">
    <property type="nucleotide sequence ID" value="XM_036159164.1"/>
</dbReference>
<dbReference type="BMRB" id="P09633"/>
<dbReference type="SMR" id="P09633"/>
<dbReference type="BioGRID" id="200390">
    <property type="interactions" value="2"/>
</dbReference>
<dbReference type="FunCoup" id="P09633">
    <property type="interactions" value="229"/>
</dbReference>
<dbReference type="IntAct" id="P09633">
    <property type="interactions" value="1"/>
</dbReference>
<dbReference type="STRING" id="10090.ENSMUSP00000001706"/>
<dbReference type="iPTMnet" id="P09633"/>
<dbReference type="PhosphoSitePlus" id="P09633"/>
<dbReference type="PaxDb" id="10090-ENSMUSP00000001706"/>
<dbReference type="ProteomicsDB" id="273329"/>
<dbReference type="Antibodypedia" id="15314">
    <property type="antibodies" value="223 antibodies from 26 providers"/>
</dbReference>
<dbReference type="DNASU" id="15427"/>
<dbReference type="Ensembl" id="ENSMUST00000001706.7">
    <property type="protein sequence ID" value="ENSMUSP00000001706.7"/>
    <property type="gene ID" value="ENSMUSG00000036139.7"/>
</dbReference>
<dbReference type="GeneID" id="15427"/>
<dbReference type="KEGG" id="mmu:15427"/>
<dbReference type="UCSC" id="uc007xxa.1">
    <property type="organism name" value="mouse"/>
</dbReference>
<dbReference type="AGR" id="MGI:96199"/>
<dbReference type="CTD" id="3225"/>
<dbReference type="MGI" id="MGI:96199">
    <property type="gene designation" value="Hoxc9"/>
</dbReference>
<dbReference type="VEuPathDB" id="HostDB:ENSMUSG00000036139"/>
<dbReference type="eggNOG" id="KOG0487">
    <property type="taxonomic scope" value="Eukaryota"/>
</dbReference>
<dbReference type="GeneTree" id="ENSGT00940000160866"/>
<dbReference type="HOGENOM" id="CLU_071854_2_0_1"/>
<dbReference type="InParanoid" id="P09633"/>
<dbReference type="OMA" id="GYADYMY"/>
<dbReference type="OrthoDB" id="6159439at2759"/>
<dbReference type="PhylomeDB" id="P09633"/>
<dbReference type="TreeFam" id="TF317819"/>
<dbReference type="BioGRID-ORCS" id="15427">
    <property type="hits" value="3 hits in 78 CRISPR screens"/>
</dbReference>
<dbReference type="ChiTaRS" id="Hoxc9">
    <property type="organism name" value="mouse"/>
</dbReference>
<dbReference type="PRO" id="PR:P09633"/>
<dbReference type="Proteomes" id="UP000000589">
    <property type="component" value="Chromosome 15"/>
</dbReference>
<dbReference type="RNAct" id="P09633">
    <property type="molecule type" value="protein"/>
</dbReference>
<dbReference type="Bgee" id="ENSMUSG00000036139">
    <property type="expression patterns" value="Expressed in embryonic post-anal tail and 94 other cell types or tissues"/>
</dbReference>
<dbReference type="GO" id="GO:0016235">
    <property type="term" value="C:aggresome"/>
    <property type="evidence" value="ECO:0007669"/>
    <property type="project" value="Ensembl"/>
</dbReference>
<dbReference type="GO" id="GO:0005654">
    <property type="term" value="C:nucleoplasm"/>
    <property type="evidence" value="ECO:0007669"/>
    <property type="project" value="Ensembl"/>
</dbReference>
<dbReference type="GO" id="GO:0017053">
    <property type="term" value="C:transcription repressor complex"/>
    <property type="evidence" value="ECO:0007669"/>
    <property type="project" value="Ensembl"/>
</dbReference>
<dbReference type="GO" id="GO:0000981">
    <property type="term" value="F:DNA-binding transcription factor activity, RNA polymerase II-specific"/>
    <property type="evidence" value="ECO:0007669"/>
    <property type="project" value="InterPro"/>
</dbReference>
<dbReference type="GO" id="GO:1990837">
    <property type="term" value="F:sequence-specific double-stranded DNA binding"/>
    <property type="evidence" value="ECO:0007669"/>
    <property type="project" value="Ensembl"/>
</dbReference>
<dbReference type="GO" id="GO:0009952">
    <property type="term" value="P:anterior/posterior pattern specification"/>
    <property type="evidence" value="ECO:0000315"/>
    <property type="project" value="MGI"/>
</dbReference>
<dbReference type="GO" id="GO:0006351">
    <property type="term" value="P:DNA-templated transcription"/>
    <property type="evidence" value="ECO:0007669"/>
    <property type="project" value="InterPro"/>
</dbReference>
<dbReference type="GO" id="GO:0048706">
    <property type="term" value="P:embryonic skeletal system development"/>
    <property type="evidence" value="ECO:0000316"/>
    <property type="project" value="MGI"/>
</dbReference>
<dbReference type="GO" id="GO:0048704">
    <property type="term" value="P:embryonic skeletal system morphogenesis"/>
    <property type="evidence" value="ECO:0000315"/>
    <property type="project" value="MGI"/>
</dbReference>
<dbReference type="CDD" id="cd00086">
    <property type="entry name" value="homeodomain"/>
    <property type="match status" value="1"/>
</dbReference>
<dbReference type="FunFam" id="1.10.10.60:FF:000018">
    <property type="entry name" value="Homeobox A10"/>
    <property type="match status" value="1"/>
</dbReference>
<dbReference type="Gene3D" id="1.10.10.60">
    <property type="entry name" value="Homeodomain-like"/>
    <property type="match status" value="1"/>
</dbReference>
<dbReference type="InterPro" id="IPR050803">
    <property type="entry name" value="Abd-B_homeobox_TF"/>
</dbReference>
<dbReference type="InterPro" id="IPR001356">
    <property type="entry name" value="HD"/>
</dbReference>
<dbReference type="InterPro" id="IPR020479">
    <property type="entry name" value="HD_metazoa"/>
</dbReference>
<dbReference type="InterPro" id="IPR017970">
    <property type="entry name" value="Homeobox_CS"/>
</dbReference>
<dbReference type="InterPro" id="IPR009057">
    <property type="entry name" value="Homeodomain-like_sf"/>
</dbReference>
<dbReference type="InterPro" id="IPR006711">
    <property type="entry name" value="Hox9_activation_N"/>
</dbReference>
<dbReference type="InterPro" id="IPR017112">
    <property type="entry name" value="HXA9/HXB9/HXC9"/>
</dbReference>
<dbReference type="PANTHER" id="PTHR45970">
    <property type="entry name" value="AGAP004664-PA"/>
    <property type="match status" value="1"/>
</dbReference>
<dbReference type="PANTHER" id="PTHR45970:SF1">
    <property type="entry name" value="HOMEOBOX PROTEIN HOX-C9"/>
    <property type="match status" value="1"/>
</dbReference>
<dbReference type="Pfam" id="PF00046">
    <property type="entry name" value="Homeodomain"/>
    <property type="match status" value="1"/>
</dbReference>
<dbReference type="Pfam" id="PF04617">
    <property type="entry name" value="Hox9_act"/>
    <property type="match status" value="1"/>
</dbReference>
<dbReference type="PIRSF" id="PIRSF037109">
    <property type="entry name" value="Homeobox_Hox9"/>
    <property type="match status" value="1"/>
</dbReference>
<dbReference type="PRINTS" id="PR00024">
    <property type="entry name" value="HOMEOBOX"/>
</dbReference>
<dbReference type="SMART" id="SM00389">
    <property type="entry name" value="HOX"/>
    <property type="match status" value="1"/>
</dbReference>
<dbReference type="SUPFAM" id="SSF46689">
    <property type="entry name" value="Homeodomain-like"/>
    <property type="match status" value="1"/>
</dbReference>
<dbReference type="PROSITE" id="PS00027">
    <property type="entry name" value="HOMEOBOX_1"/>
    <property type="match status" value="1"/>
</dbReference>
<dbReference type="PROSITE" id="PS50071">
    <property type="entry name" value="HOMEOBOX_2"/>
    <property type="match status" value="1"/>
</dbReference>
<proteinExistence type="evidence at transcript level"/>